<dbReference type="EMBL" id="K01544">
    <property type="protein sequence ID" value="AAA33005.1"/>
    <property type="molecule type" value="mRNA"/>
</dbReference>
<dbReference type="PIR" id="A01330">
    <property type="entry name" value="NWRP1"/>
</dbReference>
<dbReference type="SMR" id="P01091"/>
<dbReference type="GO" id="GO:0045735">
    <property type="term" value="F:nutrient reservoir activity"/>
    <property type="evidence" value="ECO:0007669"/>
    <property type="project" value="UniProtKB-KW"/>
</dbReference>
<dbReference type="Gene3D" id="1.10.110.10">
    <property type="entry name" value="Plant lipid-transfer and hydrophobic proteins"/>
    <property type="match status" value="1"/>
</dbReference>
<dbReference type="InterPro" id="IPR036312">
    <property type="entry name" value="Bifun_inhib/LTP/seed_sf"/>
</dbReference>
<dbReference type="InterPro" id="IPR016140">
    <property type="entry name" value="Bifunc_inhib/LTP/seed_store"/>
</dbReference>
<dbReference type="InterPro" id="IPR000617">
    <property type="entry name" value="Napin/2SS/CON"/>
</dbReference>
<dbReference type="PANTHER" id="PTHR35496">
    <property type="entry name" value="2S SEED STORAGE PROTEIN 1-RELATED"/>
    <property type="match status" value="1"/>
</dbReference>
<dbReference type="PANTHER" id="PTHR35496:SF20">
    <property type="entry name" value="2S SEED STORAGE PROTEIN 1-RELATED"/>
    <property type="match status" value="1"/>
</dbReference>
<dbReference type="Pfam" id="PF00234">
    <property type="entry name" value="Tryp_alpha_amyl"/>
    <property type="match status" value="1"/>
</dbReference>
<dbReference type="PRINTS" id="PR00496">
    <property type="entry name" value="NAPIN"/>
</dbReference>
<dbReference type="SMART" id="SM00499">
    <property type="entry name" value="AAI"/>
    <property type="match status" value="1"/>
</dbReference>
<dbReference type="SUPFAM" id="SSF47699">
    <property type="entry name" value="Bifunctional inhibitor/lipid-transfer protein/seed storage 2S albumin"/>
    <property type="match status" value="1"/>
</dbReference>
<sequence>PKCRKEFQQAQHLKACQQWLHKQAMQSGGGPSWTLDGEFDFEDDMEKQGPQQRPPLHQQYCNELQQEEPLCVCPTLRGASKAVKQQIQQQEQQQGKQQMVNRIYQTATHLPKVCNIPQVSVCPFQKTMPGPSY</sequence>
<comment type="function">
    <text>The small, basic, water-soluble napins are one of the two major kinds of storage proteins synthesized in the seed during its maturation.</text>
</comment>
<comment type="subunit">
    <text>The mature protein consists of a small and a large chain linked by disulfide bonds.</text>
</comment>
<comment type="tissue specificity">
    <text>Cotyledons and the axis.</text>
</comment>
<comment type="similarity">
    <text evidence="2">Belongs to the 2S seed storage albumins family.</text>
</comment>
<accession>P01091</accession>
<protein>
    <recommendedName>
        <fullName>Napin-1</fullName>
    </recommendedName>
    <alternativeName>
        <fullName>1.7S seed storage protein</fullName>
    </alternativeName>
    <component>
        <recommendedName>
            <fullName>Napin-1 small chain</fullName>
        </recommendedName>
    </component>
    <component>
        <recommendedName>
            <fullName>Napin-1 large chain</fullName>
        </recommendedName>
    </component>
</protein>
<reference key="1">
    <citation type="journal article" date="1983" name="J. Mol. Appl. Genet.">
        <title>cDNA clones for Brassica napus seed storage proteins: evidence from nucleotide sequence analysis that both subunits of napin are cleaved from a precursor polypeptide.</title>
        <authorList>
            <person name="Crouch M.L."/>
            <person name="Tenbarge K.M."/>
            <person name="Simon A.E."/>
            <person name="Ferl R."/>
        </authorList>
    </citation>
    <scope>NUCLEOTIDE SEQUENCE [MRNA]</scope>
    <source>
        <strain>cv. Tower</strain>
    </source>
</reference>
<keyword id="KW-1015">Disulfide bond</keyword>
<keyword id="KW-0708">Seed storage protein</keyword>
<keyword id="KW-0758">Storage protein</keyword>
<evidence type="ECO:0000255" key="1"/>
<evidence type="ECO:0000305" key="2"/>
<name>2SS1_BRANA</name>
<feature type="chain" id="PRO_0000032110" description="Napin-1 small chain">
    <location>
        <begin position="1" status="less than"/>
        <end position="30"/>
    </location>
</feature>
<feature type="propeptide" id="PRO_0000032111">
    <location>
        <begin position="31"/>
        <end position="49"/>
    </location>
</feature>
<feature type="chain" id="PRO_0000032112" description="Napin-1 large chain">
    <location>
        <begin position="50"/>
        <end position="130"/>
    </location>
</feature>
<feature type="propeptide" id="PRO_0000032113" evidence="1">
    <location>
        <begin position="131"/>
        <end position="133"/>
    </location>
</feature>
<feature type="non-terminal residue">
    <location>
        <position position="1"/>
    </location>
</feature>
<organism>
    <name type="scientific">Brassica napus</name>
    <name type="common">Rape</name>
    <dbReference type="NCBI Taxonomy" id="3708"/>
    <lineage>
        <taxon>Eukaryota</taxon>
        <taxon>Viridiplantae</taxon>
        <taxon>Streptophyta</taxon>
        <taxon>Embryophyta</taxon>
        <taxon>Tracheophyta</taxon>
        <taxon>Spermatophyta</taxon>
        <taxon>Magnoliopsida</taxon>
        <taxon>eudicotyledons</taxon>
        <taxon>Gunneridae</taxon>
        <taxon>Pentapetalae</taxon>
        <taxon>rosids</taxon>
        <taxon>malvids</taxon>
        <taxon>Brassicales</taxon>
        <taxon>Brassicaceae</taxon>
        <taxon>Brassiceae</taxon>
        <taxon>Brassica</taxon>
    </lineage>
</organism>
<proteinExistence type="evidence at transcript level"/>